<organism>
    <name type="scientific">Mycobacterium tuberculosis (strain CDC 1551 / Oshkosh)</name>
    <dbReference type="NCBI Taxonomy" id="83331"/>
    <lineage>
        <taxon>Bacteria</taxon>
        <taxon>Bacillati</taxon>
        <taxon>Actinomycetota</taxon>
        <taxon>Actinomycetes</taxon>
        <taxon>Mycobacteriales</taxon>
        <taxon>Mycobacteriaceae</taxon>
        <taxon>Mycobacterium</taxon>
        <taxon>Mycobacterium tuberculosis complex</taxon>
    </lineage>
</organism>
<comment type="function">
    <text evidence="2">Catalyzes the interconversion of D-glucose 1-phosphate (G1P) and D-glucose 6-phosphate (G6P), forming beta-D-glucose 1,6-(bis)phosphate (beta-G16P) as an intermediate.</text>
</comment>
<comment type="catalytic activity">
    <reaction evidence="2">
        <text>beta-D-glucose 1-phosphate = beta-D-glucose 6-phosphate</text>
        <dbReference type="Rhea" id="RHEA:20113"/>
        <dbReference type="ChEBI" id="CHEBI:57684"/>
        <dbReference type="ChEBI" id="CHEBI:58247"/>
        <dbReference type="EC" id="5.4.2.6"/>
    </reaction>
</comment>
<comment type="cofactor">
    <cofactor evidence="2">
        <name>Mg(2+)</name>
        <dbReference type="ChEBI" id="CHEBI:18420"/>
    </cofactor>
    <text evidence="1">Binds 1 magnesium ion per subunit.</text>
</comment>
<comment type="subunit">
    <text evidence="2">Monomer.</text>
</comment>
<comment type="PTM">
    <text evidence="1">Autophosphorylated.</text>
</comment>
<comment type="similarity">
    <text evidence="3">Belongs to the HAD-like hydrolase superfamily. CbbY/CbbZ/Gph/YieH family.</text>
</comment>
<dbReference type="EC" id="5.4.2.6" evidence="2"/>
<dbReference type="EMBL" id="AE000516">
    <property type="protein sequence ID" value="AAK47845.1"/>
    <property type="molecule type" value="Genomic_DNA"/>
</dbReference>
<dbReference type="PIR" id="E70735">
    <property type="entry name" value="E70735"/>
</dbReference>
<dbReference type="RefSeq" id="WP_003417961.1">
    <property type="nucleotide sequence ID" value="NZ_KK341227.1"/>
</dbReference>
<dbReference type="SMR" id="P9WKZ6"/>
<dbReference type="KEGG" id="mtc:MT3508"/>
<dbReference type="PATRIC" id="fig|83331.31.peg.3765"/>
<dbReference type="HOGENOM" id="CLU_045011_4_0_11"/>
<dbReference type="Proteomes" id="UP000001020">
    <property type="component" value="Chromosome"/>
</dbReference>
<dbReference type="GO" id="GO:0016853">
    <property type="term" value="F:isomerase activity"/>
    <property type="evidence" value="ECO:0007669"/>
    <property type="project" value="UniProtKB-KW"/>
</dbReference>
<dbReference type="GO" id="GO:0046872">
    <property type="term" value="F:metal ion binding"/>
    <property type="evidence" value="ECO:0007669"/>
    <property type="project" value="UniProtKB-KW"/>
</dbReference>
<dbReference type="CDD" id="cd07505">
    <property type="entry name" value="HAD_BPGM-like"/>
    <property type="match status" value="1"/>
</dbReference>
<dbReference type="Gene3D" id="3.40.50.1000">
    <property type="entry name" value="HAD superfamily/HAD-like"/>
    <property type="match status" value="1"/>
</dbReference>
<dbReference type="Gene3D" id="1.10.150.240">
    <property type="entry name" value="Putative phosphatase, domain 2"/>
    <property type="match status" value="1"/>
</dbReference>
<dbReference type="InterPro" id="IPR010976">
    <property type="entry name" value="B-phosphoglucomutase_hydrolase"/>
</dbReference>
<dbReference type="InterPro" id="IPR051600">
    <property type="entry name" value="Beta-PGM-like"/>
</dbReference>
<dbReference type="InterPro" id="IPR036412">
    <property type="entry name" value="HAD-like_sf"/>
</dbReference>
<dbReference type="InterPro" id="IPR006439">
    <property type="entry name" value="HAD-SF_hydro_IA"/>
</dbReference>
<dbReference type="InterPro" id="IPR023214">
    <property type="entry name" value="HAD_sf"/>
</dbReference>
<dbReference type="InterPro" id="IPR023198">
    <property type="entry name" value="PGP-like_dom2"/>
</dbReference>
<dbReference type="NCBIfam" id="TIGR01509">
    <property type="entry name" value="HAD-SF-IA-v3"/>
    <property type="match status" value="1"/>
</dbReference>
<dbReference type="NCBIfam" id="TIGR02009">
    <property type="entry name" value="PGMB-YQAB-SF"/>
    <property type="match status" value="1"/>
</dbReference>
<dbReference type="PANTHER" id="PTHR46193">
    <property type="entry name" value="6-PHOSPHOGLUCONATE PHOSPHATASE"/>
    <property type="match status" value="1"/>
</dbReference>
<dbReference type="PANTHER" id="PTHR46193:SF18">
    <property type="entry name" value="HEXITOL PHOSPHATASE B"/>
    <property type="match status" value="1"/>
</dbReference>
<dbReference type="Pfam" id="PF00702">
    <property type="entry name" value="Hydrolase"/>
    <property type="match status" value="1"/>
</dbReference>
<dbReference type="SFLD" id="SFLDG01129">
    <property type="entry name" value="C1.5:_HAD__Beta-PGM__Phosphata"/>
    <property type="match status" value="1"/>
</dbReference>
<dbReference type="SFLD" id="SFLDS00003">
    <property type="entry name" value="Haloacid_Dehalogenase"/>
    <property type="match status" value="1"/>
</dbReference>
<dbReference type="SUPFAM" id="SSF56784">
    <property type="entry name" value="HAD-like"/>
    <property type="match status" value="1"/>
</dbReference>
<protein>
    <recommendedName>
        <fullName evidence="2">Beta-phosphoglucomutase</fullName>
        <shortName evidence="2">Beta-PGM</shortName>
        <ecNumber evidence="2">5.4.2.6</ecNumber>
    </recommendedName>
</protein>
<reference key="1">
    <citation type="journal article" date="2002" name="J. Bacteriol.">
        <title>Whole-genome comparison of Mycobacterium tuberculosis clinical and laboratory strains.</title>
        <authorList>
            <person name="Fleischmann R.D."/>
            <person name="Alland D."/>
            <person name="Eisen J.A."/>
            <person name="Carpenter L."/>
            <person name="White O."/>
            <person name="Peterson J.D."/>
            <person name="DeBoy R.T."/>
            <person name="Dodson R.J."/>
            <person name="Gwinn M.L."/>
            <person name="Haft D.H."/>
            <person name="Hickey E.K."/>
            <person name="Kolonay J.F."/>
            <person name="Nelson W.C."/>
            <person name="Umayam L.A."/>
            <person name="Ermolaeva M.D."/>
            <person name="Salzberg S.L."/>
            <person name="Delcher A."/>
            <person name="Utterback T.R."/>
            <person name="Weidman J.F."/>
            <person name="Khouri H.M."/>
            <person name="Gill J."/>
            <person name="Mikula A."/>
            <person name="Bishai W."/>
            <person name="Jacobs W.R. Jr."/>
            <person name="Venter J.C."/>
            <person name="Fraser C.M."/>
        </authorList>
    </citation>
    <scope>NUCLEOTIDE SEQUENCE [LARGE SCALE GENOMIC DNA]</scope>
    <source>
        <strain>CDC 1551 / Oshkosh</strain>
    </source>
</reference>
<feature type="chain" id="PRO_0000427567" description="Beta-phosphoglucomutase">
    <location>
        <begin position="1"/>
        <end position="262"/>
    </location>
</feature>
<feature type="active site" description="Nucleophile" evidence="1">
    <location>
        <position position="29"/>
    </location>
</feature>
<feature type="active site" description="Proton donor/acceptor" evidence="1">
    <location>
        <position position="31"/>
    </location>
</feature>
<feature type="binding site" evidence="1">
    <location>
        <position position="29"/>
    </location>
    <ligand>
        <name>Mg(2+)</name>
        <dbReference type="ChEBI" id="CHEBI:18420"/>
    </ligand>
</feature>
<feature type="binding site" evidence="1">
    <location>
        <position position="31"/>
    </location>
    <ligand>
        <name>beta-D-glucose 6-phosphate</name>
        <dbReference type="ChEBI" id="CHEBI:58247"/>
    </ligand>
</feature>
<feature type="binding site" evidence="1">
    <location>
        <position position="31"/>
    </location>
    <ligand>
        <name>Mg(2+)</name>
        <dbReference type="ChEBI" id="CHEBI:18420"/>
    </ligand>
</feature>
<feature type="binding site" evidence="1">
    <location>
        <position position="79"/>
    </location>
    <ligand>
        <name>beta-D-glucose 6-phosphate</name>
        <dbReference type="ChEBI" id="CHEBI:58247"/>
    </ligand>
</feature>
<feature type="binding site" evidence="1">
    <location>
        <position position="82"/>
    </location>
    <ligand>
        <name>beta-D-glucose 6-phosphate</name>
        <dbReference type="ChEBI" id="CHEBI:58247"/>
    </ligand>
</feature>
<feature type="binding site" evidence="1">
    <location>
        <position position="157"/>
    </location>
    <ligand>
        <name>beta-D-glucose 6-phosphate</name>
        <dbReference type="ChEBI" id="CHEBI:58247"/>
    </ligand>
</feature>
<feature type="binding site" evidence="1">
    <location>
        <position position="159"/>
    </location>
    <ligand>
        <name>beta-D-glucose 6-phosphate</name>
        <dbReference type="ChEBI" id="CHEBI:58247"/>
    </ligand>
</feature>
<feature type="binding site" evidence="1">
    <location>
        <position position="215"/>
    </location>
    <ligand>
        <name>Mg(2+)</name>
        <dbReference type="ChEBI" id="CHEBI:18420"/>
    </ligand>
</feature>
<feature type="modified residue" description="4-aspartylphosphate" evidence="1">
    <location>
        <position position="29"/>
    </location>
</feature>
<evidence type="ECO:0000250" key="1">
    <source>
        <dbReference type="UniProtKB" id="P71447"/>
    </source>
</evidence>
<evidence type="ECO:0000250" key="2">
    <source>
        <dbReference type="UniProtKB" id="P9WKZ7"/>
    </source>
</evidence>
<evidence type="ECO:0000305" key="3"/>
<name>PGMB_MYCTO</name>
<keyword id="KW-0119">Carbohydrate metabolism</keyword>
<keyword id="KW-0413">Isomerase</keyword>
<keyword id="KW-0460">Magnesium</keyword>
<keyword id="KW-0479">Metal-binding</keyword>
<keyword id="KW-0597">Phosphoprotein</keyword>
<keyword id="KW-1185">Reference proteome</keyword>
<proteinExistence type="inferred from homology"/>
<gene>
    <name type="ordered locus">MT3508</name>
</gene>
<accession>P9WKZ6</accession>
<accession>L0TE11</accession>
<accession>P65069</accession>
<accession>Q50725</accession>
<sequence>MANWYRPNYPEVRSRVLGLPEKVRACLFDLDGVLTDTASLHTKAWKAMFDAYLAERAERTGEKFVPFDPAADYHTYVDGKKREDGVRSFLSSRAIEIPDGSPDDPGAAETVYGLGNRKNDMLHKLLRDDGAQVFDGSRRYLEAVTAAGLGVAVVSSSANTRDVLATTGLDRFVQQRVDGVTLREEHIAGKPAPDSFLRAAELLGVTPDAAAVFEDALSGVAAGRAGNFAVVVGINRTGRAAQAAQLRRHGADVVVTDLAELL</sequence>